<evidence type="ECO:0000269" key="1">
    <source>
    </source>
</evidence>
<evidence type="ECO:0000303" key="2">
    <source>
    </source>
</evidence>
<evidence type="ECO:0000305" key="3"/>
<reference evidence="3" key="1">
    <citation type="journal article" date="2002" name="J. Biol. Chem.">
        <title>Proteome map of the chloroplast lumen of Arabidopsis thaliana.</title>
        <authorList>
            <person name="Schubert M."/>
            <person name="Petersson U.A."/>
            <person name="Haas B.J."/>
            <person name="Funk C."/>
            <person name="Schroeder W.P."/>
            <person name="Kieselbach T."/>
        </authorList>
    </citation>
    <scope>PROTEIN SEQUENCE</scope>
    <scope>SUBCELLULAR LOCATION</scope>
    <source>
        <tissue evidence="1">Leaf</tissue>
    </source>
</reference>
<accession>P83092</accession>
<keyword id="KW-0150">Chloroplast</keyword>
<keyword id="KW-0903">Direct protein sequencing</keyword>
<keyword id="KW-0934">Plastid</keyword>
<keyword id="KW-1185">Reference proteome</keyword>
<keyword id="KW-0793">Thylakoid</keyword>
<feature type="chain" id="PRO_0000311680" description="Thylakoid lumenal 33.6 kDa protein">
    <location>
        <begin position="1"/>
        <end position="11" status="greater than"/>
    </location>
</feature>
<feature type="non-terminal residue" evidence="2">
    <location>
        <position position="11"/>
    </location>
</feature>
<sequence>VLYSPDTKVPR</sequence>
<organism>
    <name type="scientific">Spinacia oleracea</name>
    <name type="common">Spinach</name>
    <dbReference type="NCBI Taxonomy" id="3562"/>
    <lineage>
        <taxon>Eukaryota</taxon>
        <taxon>Viridiplantae</taxon>
        <taxon>Streptophyta</taxon>
        <taxon>Embryophyta</taxon>
        <taxon>Tracheophyta</taxon>
        <taxon>Spermatophyta</taxon>
        <taxon>Magnoliopsida</taxon>
        <taxon>eudicotyledons</taxon>
        <taxon>Gunneridae</taxon>
        <taxon>Pentapetalae</taxon>
        <taxon>Caryophyllales</taxon>
        <taxon>Chenopodiaceae</taxon>
        <taxon>Chenopodioideae</taxon>
        <taxon>Anserineae</taxon>
        <taxon>Spinacia</taxon>
    </lineage>
</organism>
<protein>
    <recommendedName>
        <fullName>Thylakoid lumenal 33.6 kDa protein</fullName>
    </recommendedName>
</protein>
<dbReference type="Proteomes" id="UP001155700">
    <property type="component" value="Unplaced"/>
</dbReference>
<dbReference type="GO" id="GO:0009543">
    <property type="term" value="C:chloroplast thylakoid lumen"/>
    <property type="evidence" value="ECO:0007669"/>
    <property type="project" value="UniProtKB-SubCell"/>
</dbReference>
<name>TL33_SPIOL</name>
<proteinExistence type="evidence at protein level"/>
<comment type="subcellular location">
    <subcellularLocation>
        <location evidence="1">Plastid</location>
        <location evidence="1">Chloroplast thylakoid lumen</location>
    </subcellularLocation>
</comment>